<name>MRAZ_PEDPA</name>
<sequence>MFMGEFEHSLDSKGRLIIPSKFRDQLDSNFVVTRGLDGCLFVYPLSEWRLVEEKLSQLPSNKKNNRAFVRFMFADAVQCDFDKQGRIIIPKKLRLHAELQKECVLVGVSNRVEIWNKARWEETIEETEENFDDIAENLIDFGL</sequence>
<reference key="1">
    <citation type="journal article" date="2006" name="Proc. Natl. Acad. Sci. U.S.A.">
        <title>Comparative genomics of the lactic acid bacteria.</title>
        <authorList>
            <person name="Makarova K.S."/>
            <person name="Slesarev A."/>
            <person name="Wolf Y.I."/>
            <person name="Sorokin A."/>
            <person name="Mirkin B."/>
            <person name="Koonin E.V."/>
            <person name="Pavlov A."/>
            <person name="Pavlova N."/>
            <person name="Karamychev V."/>
            <person name="Polouchine N."/>
            <person name="Shakhova V."/>
            <person name="Grigoriev I."/>
            <person name="Lou Y."/>
            <person name="Rohksar D."/>
            <person name="Lucas S."/>
            <person name="Huang K."/>
            <person name="Goodstein D.M."/>
            <person name="Hawkins T."/>
            <person name="Plengvidhya V."/>
            <person name="Welker D."/>
            <person name="Hughes J."/>
            <person name="Goh Y."/>
            <person name="Benson A."/>
            <person name="Baldwin K."/>
            <person name="Lee J.-H."/>
            <person name="Diaz-Muniz I."/>
            <person name="Dosti B."/>
            <person name="Smeianov V."/>
            <person name="Wechter W."/>
            <person name="Barabote R."/>
            <person name="Lorca G."/>
            <person name="Altermann E."/>
            <person name="Barrangou R."/>
            <person name="Ganesan B."/>
            <person name="Xie Y."/>
            <person name="Rawsthorne H."/>
            <person name="Tamir D."/>
            <person name="Parker C."/>
            <person name="Breidt F."/>
            <person name="Broadbent J.R."/>
            <person name="Hutkins R."/>
            <person name="O'Sullivan D."/>
            <person name="Steele J."/>
            <person name="Unlu G."/>
            <person name="Saier M.H. Jr."/>
            <person name="Klaenhammer T."/>
            <person name="Richardson P."/>
            <person name="Kozyavkin S."/>
            <person name="Weimer B.C."/>
            <person name="Mills D.A."/>
        </authorList>
    </citation>
    <scope>NUCLEOTIDE SEQUENCE [LARGE SCALE GENOMIC DNA]</scope>
    <source>
        <strain>ATCC 25745 / CCUG 21536 / LMG 10740 / 183-1w</strain>
    </source>
</reference>
<protein>
    <recommendedName>
        <fullName>Transcriptional regulator MraZ</fullName>
    </recommendedName>
</protein>
<comment type="subunit">
    <text evidence="1">Forms oligomers.</text>
</comment>
<comment type="subcellular location">
    <subcellularLocation>
        <location evidence="1">Cytoplasm</location>
        <location evidence="1">Nucleoid</location>
    </subcellularLocation>
</comment>
<comment type="similarity">
    <text evidence="1">Belongs to the MraZ family.</text>
</comment>
<keyword id="KW-0963">Cytoplasm</keyword>
<keyword id="KW-0238">DNA-binding</keyword>
<keyword id="KW-0677">Repeat</keyword>
<keyword id="KW-0804">Transcription</keyword>
<keyword id="KW-0805">Transcription regulation</keyword>
<feature type="chain" id="PRO_1000062909" description="Transcriptional regulator MraZ">
    <location>
        <begin position="1"/>
        <end position="143"/>
    </location>
</feature>
<feature type="domain" description="SpoVT-AbrB 1" evidence="2">
    <location>
        <begin position="5"/>
        <end position="47"/>
    </location>
</feature>
<feature type="domain" description="SpoVT-AbrB 2" evidence="2">
    <location>
        <begin position="76"/>
        <end position="119"/>
    </location>
</feature>
<dbReference type="EMBL" id="CP000422">
    <property type="protein sequence ID" value="ABJ68246.1"/>
    <property type="molecule type" value="Genomic_DNA"/>
</dbReference>
<dbReference type="RefSeq" id="WP_002833498.1">
    <property type="nucleotide sequence ID" value="NC_008525.1"/>
</dbReference>
<dbReference type="SMR" id="Q03EX6"/>
<dbReference type="STRING" id="278197.PEPE_1192"/>
<dbReference type="GeneID" id="33062134"/>
<dbReference type="KEGG" id="ppe:PEPE_1192"/>
<dbReference type="eggNOG" id="COG2001">
    <property type="taxonomic scope" value="Bacteria"/>
</dbReference>
<dbReference type="HOGENOM" id="CLU_107907_0_5_9"/>
<dbReference type="OrthoDB" id="9807753at2"/>
<dbReference type="Proteomes" id="UP000000773">
    <property type="component" value="Chromosome"/>
</dbReference>
<dbReference type="GO" id="GO:0005737">
    <property type="term" value="C:cytoplasm"/>
    <property type="evidence" value="ECO:0007669"/>
    <property type="project" value="UniProtKB-UniRule"/>
</dbReference>
<dbReference type="GO" id="GO:0009295">
    <property type="term" value="C:nucleoid"/>
    <property type="evidence" value="ECO:0007669"/>
    <property type="project" value="UniProtKB-SubCell"/>
</dbReference>
<dbReference type="GO" id="GO:0003700">
    <property type="term" value="F:DNA-binding transcription factor activity"/>
    <property type="evidence" value="ECO:0007669"/>
    <property type="project" value="UniProtKB-UniRule"/>
</dbReference>
<dbReference type="GO" id="GO:0000976">
    <property type="term" value="F:transcription cis-regulatory region binding"/>
    <property type="evidence" value="ECO:0007669"/>
    <property type="project" value="TreeGrafter"/>
</dbReference>
<dbReference type="GO" id="GO:2000143">
    <property type="term" value="P:negative regulation of DNA-templated transcription initiation"/>
    <property type="evidence" value="ECO:0007669"/>
    <property type="project" value="TreeGrafter"/>
</dbReference>
<dbReference type="CDD" id="cd16321">
    <property type="entry name" value="MraZ_C"/>
    <property type="match status" value="1"/>
</dbReference>
<dbReference type="CDD" id="cd16320">
    <property type="entry name" value="MraZ_N"/>
    <property type="match status" value="1"/>
</dbReference>
<dbReference type="FunFam" id="3.40.1550.20:FF:000002">
    <property type="entry name" value="Transcriptional regulator MraZ"/>
    <property type="match status" value="1"/>
</dbReference>
<dbReference type="Gene3D" id="3.40.1550.20">
    <property type="entry name" value="Transcriptional regulator MraZ domain"/>
    <property type="match status" value="1"/>
</dbReference>
<dbReference type="HAMAP" id="MF_01008">
    <property type="entry name" value="MraZ"/>
    <property type="match status" value="1"/>
</dbReference>
<dbReference type="InterPro" id="IPR003444">
    <property type="entry name" value="MraZ"/>
</dbReference>
<dbReference type="InterPro" id="IPR035644">
    <property type="entry name" value="MraZ_C"/>
</dbReference>
<dbReference type="InterPro" id="IPR020603">
    <property type="entry name" value="MraZ_dom"/>
</dbReference>
<dbReference type="InterPro" id="IPR035642">
    <property type="entry name" value="MraZ_N"/>
</dbReference>
<dbReference type="InterPro" id="IPR038619">
    <property type="entry name" value="MraZ_sf"/>
</dbReference>
<dbReference type="InterPro" id="IPR007159">
    <property type="entry name" value="SpoVT-AbrB_dom"/>
</dbReference>
<dbReference type="InterPro" id="IPR037914">
    <property type="entry name" value="SpoVT-AbrB_sf"/>
</dbReference>
<dbReference type="NCBIfam" id="TIGR00242">
    <property type="entry name" value="division/cell wall cluster transcriptional repressor MraZ"/>
    <property type="match status" value="1"/>
</dbReference>
<dbReference type="PANTHER" id="PTHR34701">
    <property type="entry name" value="TRANSCRIPTIONAL REGULATOR MRAZ"/>
    <property type="match status" value="1"/>
</dbReference>
<dbReference type="PANTHER" id="PTHR34701:SF1">
    <property type="entry name" value="TRANSCRIPTIONAL REGULATOR MRAZ"/>
    <property type="match status" value="1"/>
</dbReference>
<dbReference type="Pfam" id="PF02381">
    <property type="entry name" value="MraZ"/>
    <property type="match status" value="2"/>
</dbReference>
<dbReference type="SUPFAM" id="SSF89447">
    <property type="entry name" value="AbrB/MazE/MraZ-like"/>
    <property type="match status" value="1"/>
</dbReference>
<dbReference type="PROSITE" id="PS51740">
    <property type="entry name" value="SPOVT_ABRB"/>
    <property type="match status" value="2"/>
</dbReference>
<accession>Q03EX6</accession>
<gene>
    <name evidence="1" type="primary">mraZ</name>
    <name type="ordered locus">PEPE_1192</name>
</gene>
<evidence type="ECO:0000255" key="1">
    <source>
        <dbReference type="HAMAP-Rule" id="MF_01008"/>
    </source>
</evidence>
<evidence type="ECO:0000255" key="2">
    <source>
        <dbReference type="PROSITE-ProRule" id="PRU01076"/>
    </source>
</evidence>
<organism>
    <name type="scientific">Pediococcus pentosaceus (strain ATCC 25745 / CCUG 21536 / LMG 10740 / 183-1w)</name>
    <dbReference type="NCBI Taxonomy" id="278197"/>
    <lineage>
        <taxon>Bacteria</taxon>
        <taxon>Bacillati</taxon>
        <taxon>Bacillota</taxon>
        <taxon>Bacilli</taxon>
        <taxon>Lactobacillales</taxon>
        <taxon>Lactobacillaceae</taxon>
        <taxon>Pediococcus</taxon>
    </lineage>
</organism>
<proteinExistence type="inferred from homology"/>